<organism>
    <name type="scientific">Xenopus tropicalis</name>
    <name type="common">Western clawed frog</name>
    <name type="synonym">Silurana tropicalis</name>
    <dbReference type="NCBI Taxonomy" id="8364"/>
    <lineage>
        <taxon>Eukaryota</taxon>
        <taxon>Metazoa</taxon>
        <taxon>Chordata</taxon>
        <taxon>Craniata</taxon>
        <taxon>Vertebrata</taxon>
        <taxon>Euteleostomi</taxon>
        <taxon>Amphibia</taxon>
        <taxon>Batrachia</taxon>
        <taxon>Anura</taxon>
        <taxon>Pipoidea</taxon>
        <taxon>Pipidae</taxon>
        <taxon>Xenopodinae</taxon>
        <taxon>Xenopus</taxon>
        <taxon>Silurana</taxon>
    </lineage>
</organism>
<dbReference type="EMBL" id="BC076673">
    <property type="protein sequence ID" value="AAH76673.1"/>
    <property type="molecule type" value="mRNA"/>
</dbReference>
<dbReference type="RefSeq" id="NP_001006923.1">
    <property type="nucleotide sequence ID" value="NM_001006922.1"/>
</dbReference>
<dbReference type="SMR" id="Q6DFR0"/>
<dbReference type="FunCoup" id="Q6DFR0">
    <property type="interactions" value="623"/>
</dbReference>
<dbReference type="STRING" id="8364.ENSXETP00000024203"/>
<dbReference type="PaxDb" id="8364-ENSXETP00000060705"/>
<dbReference type="DNASU" id="448770"/>
<dbReference type="GeneID" id="448770"/>
<dbReference type="KEGG" id="xtr:448770"/>
<dbReference type="AGR" id="Xenbase:XB-GENE-946207"/>
<dbReference type="CTD" id="54472"/>
<dbReference type="Xenbase" id="XB-GENE-946207">
    <property type="gene designation" value="tollip"/>
</dbReference>
<dbReference type="eggNOG" id="ENOG502QWQA">
    <property type="taxonomic scope" value="Eukaryota"/>
</dbReference>
<dbReference type="HOGENOM" id="CLU_067725_0_0_1"/>
<dbReference type="InParanoid" id="Q6DFR0"/>
<dbReference type="OMA" id="IYIQIFD"/>
<dbReference type="OrthoDB" id="9942608at2759"/>
<dbReference type="PhylomeDB" id="Q6DFR0"/>
<dbReference type="Reactome" id="R-XTR-6798695">
    <property type="pathway name" value="Neutrophil degranulation"/>
</dbReference>
<dbReference type="Reactome" id="R-XTR-9020702">
    <property type="pathway name" value="Interleukin-1 signaling"/>
</dbReference>
<dbReference type="Proteomes" id="UP000008143">
    <property type="component" value="Chromosome 4"/>
</dbReference>
<dbReference type="Bgee" id="ENSXETG00000004612">
    <property type="expression patterns" value="Expressed in egg cell and 12 other cell types or tissues"/>
</dbReference>
<dbReference type="GO" id="GO:0005769">
    <property type="term" value="C:early endosome"/>
    <property type="evidence" value="ECO:0007669"/>
    <property type="project" value="UniProtKB-SubCell"/>
</dbReference>
<dbReference type="GO" id="GO:0043130">
    <property type="term" value="F:ubiquitin binding"/>
    <property type="evidence" value="ECO:0007669"/>
    <property type="project" value="InterPro"/>
</dbReference>
<dbReference type="GO" id="GO:0006914">
    <property type="term" value="P:autophagy"/>
    <property type="evidence" value="ECO:0007669"/>
    <property type="project" value="UniProtKB-KW"/>
</dbReference>
<dbReference type="GO" id="GO:0006954">
    <property type="term" value="P:inflammatory response"/>
    <property type="evidence" value="ECO:0007669"/>
    <property type="project" value="UniProtKB-KW"/>
</dbReference>
<dbReference type="GO" id="GO:0045087">
    <property type="term" value="P:innate immune response"/>
    <property type="evidence" value="ECO:0007669"/>
    <property type="project" value="UniProtKB-KW"/>
</dbReference>
<dbReference type="GO" id="GO:0016310">
    <property type="term" value="P:phosphorylation"/>
    <property type="evidence" value="ECO:0000250"/>
    <property type="project" value="UniProtKB"/>
</dbReference>
<dbReference type="CDD" id="cd04016">
    <property type="entry name" value="C2_Tollip"/>
    <property type="match status" value="1"/>
</dbReference>
<dbReference type="CDD" id="cd14363">
    <property type="entry name" value="CUE_TOLIP"/>
    <property type="match status" value="1"/>
</dbReference>
<dbReference type="FunFam" id="1.10.8.10:FF:000036">
    <property type="entry name" value="Toll-interacting protein-like Protein"/>
    <property type="match status" value="1"/>
</dbReference>
<dbReference type="FunFam" id="2.60.40.150:FF:000055">
    <property type="entry name" value="Toll-interacting protein-like Protein"/>
    <property type="match status" value="1"/>
</dbReference>
<dbReference type="Gene3D" id="2.60.40.150">
    <property type="entry name" value="C2 domain"/>
    <property type="match status" value="1"/>
</dbReference>
<dbReference type="Gene3D" id="1.10.8.10">
    <property type="entry name" value="DNA helicase RuvA subunit, C-terminal domain"/>
    <property type="match status" value="1"/>
</dbReference>
<dbReference type="InterPro" id="IPR000008">
    <property type="entry name" value="C2_dom"/>
</dbReference>
<dbReference type="InterPro" id="IPR035892">
    <property type="entry name" value="C2_domain_sf"/>
</dbReference>
<dbReference type="InterPro" id="IPR003892">
    <property type="entry name" value="CUE"/>
</dbReference>
<dbReference type="InterPro" id="IPR041799">
    <property type="entry name" value="TOLIP_CUE"/>
</dbReference>
<dbReference type="InterPro" id="IPR037301">
    <property type="entry name" value="Tollip_C2"/>
</dbReference>
<dbReference type="InterPro" id="IPR009060">
    <property type="entry name" value="UBA-like_sf"/>
</dbReference>
<dbReference type="PANTHER" id="PTHR16461">
    <property type="entry name" value="TOLL-INTERACTING PROTEIN"/>
    <property type="match status" value="1"/>
</dbReference>
<dbReference type="PANTHER" id="PTHR16461:SF5">
    <property type="entry name" value="TOLL-INTERACTING PROTEIN"/>
    <property type="match status" value="1"/>
</dbReference>
<dbReference type="Pfam" id="PF00168">
    <property type="entry name" value="C2"/>
    <property type="match status" value="1"/>
</dbReference>
<dbReference type="Pfam" id="PF02845">
    <property type="entry name" value="CUE"/>
    <property type="match status" value="1"/>
</dbReference>
<dbReference type="SMART" id="SM00239">
    <property type="entry name" value="C2"/>
    <property type="match status" value="1"/>
</dbReference>
<dbReference type="SMART" id="SM00546">
    <property type="entry name" value="CUE"/>
    <property type="match status" value="1"/>
</dbReference>
<dbReference type="SUPFAM" id="SSF49562">
    <property type="entry name" value="C2 domain (Calcium/lipid-binding domain, CaLB)"/>
    <property type="match status" value="1"/>
</dbReference>
<dbReference type="SUPFAM" id="SSF46934">
    <property type="entry name" value="UBA-like"/>
    <property type="match status" value="1"/>
</dbReference>
<dbReference type="PROSITE" id="PS50004">
    <property type="entry name" value="C2"/>
    <property type="match status" value="1"/>
</dbReference>
<dbReference type="PROSITE" id="PS51140">
    <property type="entry name" value="CUE"/>
    <property type="match status" value="1"/>
</dbReference>
<evidence type="ECO:0000250" key="1"/>
<evidence type="ECO:0000250" key="2">
    <source>
        <dbReference type="UniProtKB" id="Q9H0E2"/>
    </source>
</evidence>
<evidence type="ECO:0000255" key="3">
    <source>
        <dbReference type="PROSITE-ProRule" id="PRU00041"/>
    </source>
</evidence>
<evidence type="ECO:0000255" key="4">
    <source>
        <dbReference type="PROSITE-ProRule" id="PRU00468"/>
    </source>
</evidence>
<evidence type="ECO:0000305" key="5"/>
<accession>Q6DFR0</accession>
<name>TOLIP_XENTR</name>
<feature type="chain" id="PRO_0000384940" description="Toll-interacting protein">
    <location>
        <begin position="1"/>
        <end position="269"/>
    </location>
</feature>
<feature type="domain" description="C2" evidence="3">
    <location>
        <begin position="35"/>
        <end position="152"/>
    </location>
</feature>
<feature type="domain" description="CUE" evidence="4">
    <location>
        <begin position="224"/>
        <end position="267"/>
    </location>
</feature>
<feature type="short sequence motif" description="AIM1">
    <location>
        <begin position="133"/>
        <end position="136"/>
    </location>
</feature>
<feature type="short sequence motif" description="AIM2">
    <location>
        <begin position="151"/>
        <end position="154"/>
    </location>
</feature>
<sequence>MATSISTQRGQVFIGELPQDFLRITPTQQQQQIQLDAQAAQQLQYSGVMGTMGRLSITVVQAKLAKNYGMTRMDPYCRIRLGYAVYETPTAHNGAKNPRWNKVIQCTIPPGVDSFYLEIFDERAFSMDDRIAWTHITIPETLKEGKHVDEWFSLSGRQGDDKEGMINLVMSYTSVPAMMPQQPVVLMPTVYQQGVGYVPIAGPIYNPGMPMAAPPPAVNPQHQTREEDIKFIKDMFPTMDPEVIRSVLEAQGGNRDAAVNSLLQMVEDS</sequence>
<keyword id="KW-0072">Autophagy</keyword>
<keyword id="KW-0963">Cytoplasm</keyword>
<keyword id="KW-0967">Endosome</keyword>
<keyword id="KW-0391">Immunity</keyword>
<keyword id="KW-0395">Inflammatory response</keyword>
<keyword id="KW-0399">Innate immunity</keyword>
<keyword id="KW-1185">Reference proteome</keyword>
<keyword id="KW-0677">Repeat</keyword>
<reference key="1">
    <citation type="submission" date="2004-07" db="EMBL/GenBank/DDBJ databases">
        <authorList>
            <consortium name="NIH - Xenopus Gene Collection (XGC) project"/>
        </authorList>
    </citation>
    <scope>NUCLEOTIDE SEQUENCE [LARGE SCALE MRNA]</scope>
    <source>
        <tissue>Embryo</tissue>
    </source>
</reference>
<comment type="function">
    <text evidence="1 2">Component of the signaling pathway of IL-1 and Toll-like receptors. Inhibits cell activation by microbial products. Connects the ubiquitin pathway to autophagy by functioning as a ubiquitin-ATG8 family adapter and thus mediating autophagic clearance of ubiquitin conjugates. The TOLLIP-dependent selective autophagy pathway plays an important role in clearance of cytotoxic polyQ proteins aggregates (By similarity). In a complex with TOM1, recruits ubiquitin-conjugated proteins onto early endosomes (By similarity). Binds to phosphatidylinositol 3-phosphate (PtdIns(3)P) (By similarity).</text>
</comment>
<comment type="subunit">
    <text evidence="2">Interacts with ATG8 family proteins (via AIM motifs), and ubiquitin (via CUE domain). Found in a complex with TOM1; interacts (via N-terminus) with TOM1 (via GAT domain); the interactions leads to TOM1-recruitment to endosomes and inhibition of TOLLIP binding to PtdIns(3)P (By similarity).</text>
</comment>
<comment type="subcellular location">
    <subcellularLocation>
        <location evidence="2">Cytoplasm</location>
    </subcellularLocation>
    <subcellularLocation>
        <location evidence="2">Endosome</location>
    </subcellularLocation>
    <subcellularLocation>
        <location evidence="2">Early endosome</location>
    </subcellularLocation>
    <text evidence="2">Localized to endo/exosomal vesicles.</text>
</comment>
<comment type="domain">
    <text evidence="2">Both ATG8-interaction motifs (AIM1 and AIM2) are required for the association with ATG8 family proteins.</text>
</comment>
<comment type="domain">
    <text evidence="2">The N-terminal TOM1-binding domain (residues 1-53) is a disordered domain that partially folds when bound to the GAT domain of TOM1.</text>
</comment>
<comment type="similarity">
    <text evidence="5">Belongs to the tollip family.</text>
</comment>
<protein>
    <recommendedName>
        <fullName>Toll-interacting protein</fullName>
    </recommendedName>
</protein>
<gene>
    <name type="primary">tollip</name>
</gene>
<proteinExistence type="evidence at transcript level"/>